<evidence type="ECO:0000255" key="1">
    <source>
        <dbReference type="HAMAP-Rule" id="MF_00412"/>
    </source>
</evidence>
<proteinExistence type="inferred from homology"/>
<feature type="chain" id="PRO_0000230035" description="Gamma-glutamyl phosphate reductase">
    <location>
        <begin position="1"/>
        <end position="438"/>
    </location>
</feature>
<organism>
    <name type="scientific">Natronomonas pharaonis (strain ATCC 35678 / DSM 2160 / CIP 103997 / JCM 8858 / NBRC 14720 / NCIMB 2260 / Gabara)</name>
    <name type="common">Halobacterium pharaonis</name>
    <dbReference type="NCBI Taxonomy" id="348780"/>
    <lineage>
        <taxon>Archaea</taxon>
        <taxon>Methanobacteriati</taxon>
        <taxon>Methanobacteriota</taxon>
        <taxon>Stenosarchaea group</taxon>
        <taxon>Halobacteria</taxon>
        <taxon>Halobacteriales</taxon>
        <taxon>Haloarculaceae</taxon>
        <taxon>Natronomonas</taxon>
    </lineage>
</organism>
<sequence>MTETTEAKVDAAQTAALELANESDEARQENLQAIADAIDERRAEVLEANEKDVEAAEEMLEAGEYSQALVDRLKLSDAKLDSIIEMVRSVAGQEDPLGKTLTARELDDGLDLYKVSVPIGVIGTVFESRPDALVQIAALSLRSGNAVILKGGSEASHSNRVLYEIIREATADLPDGWAQLIEAREDVDRLLGMDDSVDLLMPRGSSAFVSYIQDNTSIPVLGHTEGVCHVYVDDAADLDMATDIAYDAKVQYPAVCNAVETLLVHEDVAEEYLPDIAARYAEADVEMRGDEATRSVLDRDIEAATDDDWTSEYGDLIVAIKVVDSLESAIDHINTNGSKHTESIVTEDDGRASTFMRRLDSASVFHNASTRFSDGYRFGLGAEVGISTGKIHARGPVGLKGLTTYKYHLEGDGHLVATYAGEDAKPFSHEEFDGEWSP</sequence>
<name>PROA_NATPD</name>
<dbReference type="EC" id="1.2.1.41" evidence="1"/>
<dbReference type="EMBL" id="CR936257">
    <property type="protein sequence ID" value="CAI50080.1"/>
    <property type="molecule type" value="Genomic_DNA"/>
</dbReference>
<dbReference type="RefSeq" id="WP_011323696.1">
    <property type="nucleotide sequence ID" value="NC_007426.1"/>
</dbReference>
<dbReference type="SMR" id="Q3IP72"/>
<dbReference type="STRING" id="348780.NP_3978A"/>
<dbReference type="EnsemblBacteria" id="CAI50080">
    <property type="protein sequence ID" value="CAI50080"/>
    <property type="gene ID" value="NP_3978A"/>
</dbReference>
<dbReference type="GeneID" id="3703054"/>
<dbReference type="KEGG" id="nph:NP_3978A"/>
<dbReference type="eggNOG" id="arCOG01253">
    <property type="taxonomic scope" value="Archaea"/>
</dbReference>
<dbReference type="HOGENOM" id="CLU_030231_0_1_2"/>
<dbReference type="OrthoDB" id="53031at2157"/>
<dbReference type="UniPathway" id="UPA00098">
    <property type="reaction ID" value="UER00360"/>
</dbReference>
<dbReference type="Proteomes" id="UP000002698">
    <property type="component" value="Chromosome"/>
</dbReference>
<dbReference type="GO" id="GO:0005737">
    <property type="term" value="C:cytoplasm"/>
    <property type="evidence" value="ECO:0007669"/>
    <property type="project" value="UniProtKB-SubCell"/>
</dbReference>
<dbReference type="GO" id="GO:0004350">
    <property type="term" value="F:glutamate-5-semialdehyde dehydrogenase activity"/>
    <property type="evidence" value="ECO:0007669"/>
    <property type="project" value="UniProtKB-UniRule"/>
</dbReference>
<dbReference type="GO" id="GO:0050661">
    <property type="term" value="F:NADP binding"/>
    <property type="evidence" value="ECO:0007669"/>
    <property type="project" value="InterPro"/>
</dbReference>
<dbReference type="GO" id="GO:0055129">
    <property type="term" value="P:L-proline biosynthetic process"/>
    <property type="evidence" value="ECO:0007669"/>
    <property type="project" value="UniProtKB-UniRule"/>
</dbReference>
<dbReference type="CDD" id="cd07079">
    <property type="entry name" value="ALDH_F18-19_ProA-GPR"/>
    <property type="match status" value="1"/>
</dbReference>
<dbReference type="FunFam" id="3.40.309.10:FF:000006">
    <property type="entry name" value="Gamma-glutamyl phosphate reductase"/>
    <property type="match status" value="1"/>
</dbReference>
<dbReference type="Gene3D" id="3.40.605.10">
    <property type="entry name" value="Aldehyde Dehydrogenase, Chain A, domain 1"/>
    <property type="match status" value="1"/>
</dbReference>
<dbReference type="Gene3D" id="3.40.309.10">
    <property type="entry name" value="Aldehyde Dehydrogenase, Chain A, domain 2"/>
    <property type="match status" value="1"/>
</dbReference>
<dbReference type="HAMAP" id="MF_00412">
    <property type="entry name" value="ProA"/>
    <property type="match status" value="1"/>
</dbReference>
<dbReference type="InterPro" id="IPR016161">
    <property type="entry name" value="Ald_DH/histidinol_DH"/>
</dbReference>
<dbReference type="InterPro" id="IPR016163">
    <property type="entry name" value="Ald_DH_C"/>
</dbReference>
<dbReference type="InterPro" id="IPR016162">
    <property type="entry name" value="Ald_DH_N"/>
</dbReference>
<dbReference type="InterPro" id="IPR015590">
    <property type="entry name" value="Aldehyde_DH_dom"/>
</dbReference>
<dbReference type="InterPro" id="IPR020593">
    <property type="entry name" value="G-glutamylP_reductase_CS"/>
</dbReference>
<dbReference type="InterPro" id="IPR012134">
    <property type="entry name" value="Glu-5-SA_DH"/>
</dbReference>
<dbReference type="InterPro" id="IPR000965">
    <property type="entry name" value="GPR_dom"/>
</dbReference>
<dbReference type="NCBIfam" id="NF001221">
    <property type="entry name" value="PRK00197.1"/>
    <property type="match status" value="1"/>
</dbReference>
<dbReference type="NCBIfam" id="TIGR00407">
    <property type="entry name" value="proA"/>
    <property type="match status" value="1"/>
</dbReference>
<dbReference type="PANTHER" id="PTHR11063:SF8">
    <property type="entry name" value="DELTA-1-PYRROLINE-5-CARBOXYLATE SYNTHASE"/>
    <property type="match status" value="1"/>
</dbReference>
<dbReference type="PANTHER" id="PTHR11063">
    <property type="entry name" value="GLUTAMATE SEMIALDEHYDE DEHYDROGENASE"/>
    <property type="match status" value="1"/>
</dbReference>
<dbReference type="Pfam" id="PF00171">
    <property type="entry name" value="Aldedh"/>
    <property type="match status" value="1"/>
</dbReference>
<dbReference type="PIRSF" id="PIRSF000151">
    <property type="entry name" value="GPR"/>
    <property type="match status" value="1"/>
</dbReference>
<dbReference type="SUPFAM" id="SSF53720">
    <property type="entry name" value="ALDH-like"/>
    <property type="match status" value="1"/>
</dbReference>
<dbReference type="PROSITE" id="PS01223">
    <property type="entry name" value="PROA"/>
    <property type="match status" value="1"/>
</dbReference>
<gene>
    <name evidence="1" type="primary">proA</name>
    <name type="ordered locus">NP_3978A</name>
</gene>
<reference key="1">
    <citation type="journal article" date="2005" name="Genome Res.">
        <title>Living with two extremes: conclusions from the genome sequence of Natronomonas pharaonis.</title>
        <authorList>
            <person name="Falb M."/>
            <person name="Pfeiffer F."/>
            <person name="Palm P."/>
            <person name="Rodewald K."/>
            <person name="Hickmann V."/>
            <person name="Tittor J."/>
            <person name="Oesterhelt D."/>
        </authorList>
    </citation>
    <scope>NUCLEOTIDE SEQUENCE [LARGE SCALE GENOMIC DNA]</scope>
    <source>
        <strain>ATCC 35678 / DSM 2160 / CIP 103997 / JCM 8858 / NBRC 14720 / NCIMB 2260 / Gabara</strain>
    </source>
</reference>
<comment type="function">
    <text evidence="1">Catalyzes the NADPH-dependent reduction of L-glutamate 5-phosphate into L-glutamate 5-semialdehyde and phosphate. The product spontaneously undergoes cyclization to form 1-pyrroline-5-carboxylate.</text>
</comment>
<comment type="catalytic activity">
    <reaction evidence="1">
        <text>L-glutamate 5-semialdehyde + phosphate + NADP(+) = L-glutamyl 5-phosphate + NADPH + H(+)</text>
        <dbReference type="Rhea" id="RHEA:19541"/>
        <dbReference type="ChEBI" id="CHEBI:15378"/>
        <dbReference type="ChEBI" id="CHEBI:43474"/>
        <dbReference type="ChEBI" id="CHEBI:57783"/>
        <dbReference type="ChEBI" id="CHEBI:58066"/>
        <dbReference type="ChEBI" id="CHEBI:58274"/>
        <dbReference type="ChEBI" id="CHEBI:58349"/>
        <dbReference type="EC" id="1.2.1.41"/>
    </reaction>
</comment>
<comment type="pathway">
    <text evidence="1">Amino-acid biosynthesis; L-proline biosynthesis; L-glutamate 5-semialdehyde from L-glutamate: step 2/2.</text>
</comment>
<comment type="subcellular location">
    <subcellularLocation>
        <location evidence="1">Cytoplasm</location>
    </subcellularLocation>
</comment>
<comment type="similarity">
    <text evidence="1">Belongs to the gamma-glutamyl phosphate reductase family.</text>
</comment>
<accession>Q3IP72</accession>
<protein>
    <recommendedName>
        <fullName evidence="1">Gamma-glutamyl phosphate reductase</fullName>
        <shortName evidence="1">GPR</shortName>
        <ecNumber evidence="1">1.2.1.41</ecNumber>
    </recommendedName>
    <alternativeName>
        <fullName evidence="1">Glutamate-5-semialdehyde dehydrogenase</fullName>
    </alternativeName>
    <alternativeName>
        <fullName evidence="1">Glutamyl-gamma-semialdehyde dehydrogenase</fullName>
        <shortName evidence="1">GSA dehydrogenase</shortName>
    </alternativeName>
</protein>
<keyword id="KW-0028">Amino-acid biosynthesis</keyword>
<keyword id="KW-0963">Cytoplasm</keyword>
<keyword id="KW-0521">NADP</keyword>
<keyword id="KW-0560">Oxidoreductase</keyword>
<keyword id="KW-0641">Proline biosynthesis</keyword>
<keyword id="KW-1185">Reference proteome</keyword>